<sequence>MNMTKGALILSLSFLLAACSSIPQNIKGNNQPDIQKSFVAVHNQPGLYVGQQARFGGKVINVINGKTDTLLEISVLPLDSYAKPDIEANYQGRLLARQSGFLDPVNYRNHFVTILGTIQGEQPGFINKVPYNFLEVNMQGIQVWHLREVVNTTYNLWDYGYGAFWPEPGWGAPYYTNAVSQVTPELVK</sequence>
<comment type="function">
    <text>The induction of Slp may help to stabilize the outer membrane during carbon starvation and stationary phase.</text>
</comment>
<comment type="subunit">
    <text evidence="2">Forms homooligomers.</text>
</comment>
<comment type="interaction">
    <interactant intactId="EBI-907245">
        <id>P37194</id>
    </interactant>
    <interactant intactId="EBI-907245">
        <id>P37194</id>
        <label>slp</label>
    </interactant>
    <organismsDiffer>false</organismsDiffer>
    <experiments>2</experiments>
</comment>
<comment type="subcellular location">
    <subcellularLocation>
        <location evidence="2">Cell outer membrane</location>
        <topology evidence="1 2">Lipid-anchor</topology>
    </subcellularLocation>
</comment>
<comment type="induction">
    <text>Induced upon starvation and slowed growth. cAMP/CRP-independent.</text>
</comment>
<comment type="sequence caution" evidence="4">
    <conflict type="erroneous initiation">
        <sequence resource="EMBL-CDS" id="AAB18482"/>
    </conflict>
    <text>Extended N-terminus.</text>
</comment>
<organism>
    <name type="scientific">Escherichia coli (strain K12)</name>
    <dbReference type="NCBI Taxonomy" id="83333"/>
    <lineage>
        <taxon>Bacteria</taxon>
        <taxon>Pseudomonadati</taxon>
        <taxon>Pseudomonadota</taxon>
        <taxon>Gammaproteobacteria</taxon>
        <taxon>Enterobacterales</taxon>
        <taxon>Enterobacteriaceae</taxon>
        <taxon>Escherichia</taxon>
    </lineage>
</organism>
<dbReference type="EMBL" id="L23635">
    <property type="protein sequence ID" value="AAA60370.1"/>
    <property type="molecule type" value="Genomic_DNA"/>
</dbReference>
<dbReference type="EMBL" id="U00039">
    <property type="protein sequence ID" value="AAB18482.1"/>
    <property type="status" value="ALT_INIT"/>
    <property type="molecule type" value="Genomic_DNA"/>
</dbReference>
<dbReference type="EMBL" id="U00096">
    <property type="protein sequence ID" value="AAC76531.2"/>
    <property type="molecule type" value="Genomic_DNA"/>
</dbReference>
<dbReference type="EMBL" id="AP009048">
    <property type="protein sequence ID" value="BAE77788.1"/>
    <property type="molecule type" value="Genomic_DNA"/>
</dbReference>
<dbReference type="PIR" id="S47726">
    <property type="entry name" value="S47726"/>
</dbReference>
<dbReference type="RefSeq" id="NP_417963.4">
    <property type="nucleotide sequence ID" value="NC_000913.3"/>
</dbReference>
<dbReference type="RefSeq" id="WP_001350553.1">
    <property type="nucleotide sequence ID" value="NZ_LN832404.1"/>
</dbReference>
<dbReference type="BioGRID" id="4261141">
    <property type="interactions" value="148"/>
</dbReference>
<dbReference type="BioGRID" id="852330">
    <property type="interactions" value="1"/>
</dbReference>
<dbReference type="FunCoup" id="P37194">
    <property type="interactions" value="44"/>
</dbReference>
<dbReference type="IntAct" id="P37194">
    <property type="interactions" value="4"/>
</dbReference>
<dbReference type="STRING" id="511145.b3506"/>
<dbReference type="jPOST" id="P37194"/>
<dbReference type="PaxDb" id="511145-b3506"/>
<dbReference type="EnsemblBacteria" id="AAC76531">
    <property type="protein sequence ID" value="AAC76531"/>
    <property type="gene ID" value="b3506"/>
</dbReference>
<dbReference type="GeneID" id="948022"/>
<dbReference type="KEGG" id="ecj:JW3474"/>
<dbReference type="KEGG" id="eco:b3506"/>
<dbReference type="KEGG" id="ecoc:C3026_18995"/>
<dbReference type="PATRIC" id="fig|511145.12.peg.3613"/>
<dbReference type="EchoBASE" id="EB1836"/>
<dbReference type="eggNOG" id="COG3065">
    <property type="taxonomic scope" value="Bacteria"/>
</dbReference>
<dbReference type="HOGENOM" id="CLU_100924_0_0_6"/>
<dbReference type="InParanoid" id="P37194"/>
<dbReference type="OMA" id="VIYLWPE"/>
<dbReference type="OrthoDB" id="5295757at2"/>
<dbReference type="PhylomeDB" id="P37194"/>
<dbReference type="BioCyc" id="EcoCyc:EG11890-MONOMER"/>
<dbReference type="PHI-base" id="PHI:9256"/>
<dbReference type="PRO" id="PR:P37194"/>
<dbReference type="Proteomes" id="UP000000625">
    <property type="component" value="Chromosome"/>
</dbReference>
<dbReference type="GO" id="GO:0009279">
    <property type="term" value="C:cell outer membrane"/>
    <property type="evidence" value="ECO:0007669"/>
    <property type="project" value="UniProtKB-SubCell"/>
</dbReference>
<dbReference type="GO" id="GO:0019867">
    <property type="term" value="C:outer membrane"/>
    <property type="evidence" value="ECO:0000314"/>
    <property type="project" value="EcoCyc"/>
</dbReference>
<dbReference type="GO" id="GO:0042802">
    <property type="term" value="F:identical protein binding"/>
    <property type="evidence" value="ECO:0000353"/>
    <property type="project" value="IntAct"/>
</dbReference>
<dbReference type="InterPro" id="IPR004658">
    <property type="entry name" value="OMP_Slp"/>
</dbReference>
<dbReference type="NCBIfam" id="TIGR00752">
    <property type="entry name" value="slp"/>
    <property type="match status" value="1"/>
</dbReference>
<dbReference type="PANTHER" id="PTHR37530">
    <property type="entry name" value="OUTER MEMBRANE PROTEIN SLP"/>
    <property type="match status" value="1"/>
</dbReference>
<dbReference type="PANTHER" id="PTHR37530:SF1">
    <property type="entry name" value="OUTER MEMBRANE PROTEIN SLP"/>
    <property type="match status" value="1"/>
</dbReference>
<dbReference type="Pfam" id="PF03843">
    <property type="entry name" value="Slp"/>
    <property type="match status" value="1"/>
</dbReference>
<dbReference type="PIRSF" id="PIRSF004982">
    <property type="entry name" value="SlP"/>
    <property type="match status" value="1"/>
</dbReference>
<dbReference type="PROSITE" id="PS51257">
    <property type="entry name" value="PROKAR_LIPOPROTEIN"/>
    <property type="match status" value="1"/>
</dbReference>
<accession>P37194</accession>
<accession>P76709</accession>
<accession>Q2M7G8</accession>
<evidence type="ECO:0000255" key="1">
    <source>
        <dbReference type="PROSITE-ProRule" id="PRU00303"/>
    </source>
</evidence>
<evidence type="ECO:0000269" key="2">
    <source>
    </source>
</evidence>
<evidence type="ECO:0000269" key="3">
    <source>
    </source>
</evidence>
<evidence type="ECO:0000305" key="4"/>
<protein>
    <recommendedName>
        <fullName>Outer membrane protein Slp</fullName>
    </recommendedName>
</protein>
<gene>
    <name type="primary">slp</name>
    <name type="ordered locus">b3506</name>
    <name type="ordered locus">JW3474</name>
</gene>
<reference key="1">
    <citation type="journal article" date="1994" name="Mol. Microbiol.">
        <title>Characterization of the carbon starvation-inducible and stationary phase-inducible gene slp encoding an outer membrane lipoprotein in Escherichia coli.</title>
        <authorList>
            <person name="Alexander D.M."/>
            <person name="St John A.C."/>
        </authorList>
    </citation>
    <scope>NUCLEOTIDE SEQUENCE [GENOMIC DNA]</scope>
    <scope>DIACYLGLYCEROL AT CYS-19</scope>
    <scope>PALMITOYLATION AT CYS-19</scope>
    <source>
        <strain>K12</strain>
    </source>
</reference>
<reference key="2">
    <citation type="journal article" date="1994" name="Nucleic Acids Res.">
        <title>Analysis of the Escherichia coli genome. V. DNA sequence of the region from 76.0 to 81.5 minutes.</title>
        <authorList>
            <person name="Sofia H.J."/>
            <person name="Burland V."/>
            <person name="Daniels D.L."/>
            <person name="Plunkett G. III"/>
            <person name="Blattner F.R."/>
        </authorList>
    </citation>
    <scope>NUCLEOTIDE SEQUENCE [LARGE SCALE GENOMIC DNA]</scope>
    <source>
        <strain>K12 / MG1655 / ATCC 47076</strain>
    </source>
</reference>
<reference key="3">
    <citation type="journal article" date="1997" name="Science">
        <title>The complete genome sequence of Escherichia coli K-12.</title>
        <authorList>
            <person name="Blattner F.R."/>
            <person name="Plunkett G. III"/>
            <person name="Bloch C.A."/>
            <person name="Perna N.T."/>
            <person name="Burland V."/>
            <person name="Riley M."/>
            <person name="Collado-Vides J."/>
            <person name="Glasner J.D."/>
            <person name="Rode C.K."/>
            <person name="Mayhew G.F."/>
            <person name="Gregor J."/>
            <person name="Davis N.W."/>
            <person name="Kirkpatrick H.A."/>
            <person name="Goeden M.A."/>
            <person name="Rose D.J."/>
            <person name="Mau B."/>
            <person name="Shao Y."/>
        </authorList>
    </citation>
    <scope>NUCLEOTIDE SEQUENCE [LARGE SCALE GENOMIC DNA]</scope>
    <source>
        <strain>K12 / MG1655 / ATCC 47076</strain>
    </source>
</reference>
<reference key="4">
    <citation type="journal article" date="2006" name="Mol. Syst. Biol.">
        <title>Highly accurate genome sequences of Escherichia coli K-12 strains MG1655 and W3110.</title>
        <authorList>
            <person name="Hayashi K."/>
            <person name="Morooka N."/>
            <person name="Yamamoto Y."/>
            <person name="Fujita K."/>
            <person name="Isono K."/>
            <person name="Choi S."/>
            <person name="Ohtsubo E."/>
            <person name="Baba T."/>
            <person name="Wanner B.L."/>
            <person name="Mori H."/>
            <person name="Horiuchi T."/>
        </authorList>
    </citation>
    <scope>NUCLEOTIDE SEQUENCE [LARGE SCALE GENOMIC DNA]</scope>
    <source>
        <strain>K12 / W3110 / ATCC 27325 / DSM 5911</strain>
    </source>
</reference>
<reference key="5">
    <citation type="journal article" date="2005" name="J. Biol. Chem.">
        <title>Protein complexes of the Escherichia coli cell envelope.</title>
        <authorList>
            <person name="Stenberg F."/>
            <person name="Chovanec P."/>
            <person name="Maslen S.L."/>
            <person name="Robinson C.V."/>
            <person name="Ilag L."/>
            <person name="von Heijne G."/>
            <person name="Daley D.O."/>
        </authorList>
    </citation>
    <scope>SUBUNIT</scope>
    <scope>SUBCELLULAR LOCATION</scope>
    <source>
        <strain>BL21-DE3</strain>
    </source>
</reference>
<name>SLP_ECOLI</name>
<proteinExistence type="evidence at protein level"/>
<keyword id="KW-0998">Cell outer membrane</keyword>
<keyword id="KW-0449">Lipoprotein</keyword>
<keyword id="KW-0472">Membrane</keyword>
<keyword id="KW-0564">Palmitate</keyword>
<keyword id="KW-1185">Reference proteome</keyword>
<keyword id="KW-0732">Signal</keyword>
<feature type="signal peptide">
    <location>
        <begin position="1"/>
        <end position="18"/>
    </location>
</feature>
<feature type="chain" id="PRO_0000018187" description="Outer membrane protein Slp">
    <location>
        <begin position="19"/>
        <end position="188"/>
    </location>
</feature>
<feature type="lipid moiety-binding region" description="N-palmitoyl cysteine" evidence="1 3">
    <location>
        <position position="19"/>
    </location>
</feature>
<feature type="lipid moiety-binding region" description="S-diacylglycerol cysteine" evidence="1 3">
    <location>
        <position position="19"/>
    </location>
</feature>